<protein>
    <recommendedName>
        <fullName evidence="1">Large ribosomal subunit protein bL9</fullName>
    </recommendedName>
    <alternativeName>
        <fullName evidence="2">50S ribosomal protein L9</fullName>
    </alternativeName>
</protein>
<dbReference type="EMBL" id="CP000026">
    <property type="protein sequence ID" value="AAV79948.1"/>
    <property type="molecule type" value="Genomic_DNA"/>
</dbReference>
<dbReference type="RefSeq" id="WP_001196065.1">
    <property type="nucleotide sequence ID" value="NC_006511.1"/>
</dbReference>
<dbReference type="SMR" id="Q5PJ55"/>
<dbReference type="GeneID" id="66758618"/>
<dbReference type="KEGG" id="spt:SPA4211"/>
<dbReference type="HOGENOM" id="CLU_078938_4_1_6"/>
<dbReference type="Proteomes" id="UP000008185">
    <property type="component" value="Chromosome"/>
</dbReference>
<dbReference type="GO" id="GO:1990904">
    <property type="term" value="C:ribonucleoprotein complex"/>
    <property type="evidence" value="ECO:0007669"/>
    <property type="project" value="UniProtKB-KW"/>
</dbReference>
<dbReference type="GO" id="GO:0005840">
    <property type="term" value="C:ribosome"/>
    <property type="evidence" value="ECO:0007669"/>
    <property type="project" value="UniProtKB-KW"/>
</dbReference>
<dbReference type="GO" id="GO:0019843">
    <property type="term" value="F:rRNA binding"/>
    <property type="evidence" value="ECO:0007669"/>
    <property type="project" value="UniProtKB-UniRule"/>
</dbReference>
<dbReference type="GO" id="GO:0003735">
    <property type="term" value="F:structural constituent of ribosome"/>
    <property type="evidence" value="ECO:0007669"/>
    <property type="project" value="InterPro"/>
</dbReference>
<dbReference type="GO" id="GO:0006412">
    <property type="term" value="P:translation"/>
    <property type="evidence" value="ECO:0007669"/>
    <property type="project" value="UniProtKB-UniRule"/>
</dbReference>
<dbReference type="FunFam" id="3.10.430.100:FF:000001">
    <property type="entry name" value="50S ribosomal protein L9"/>
    <property type="match status" value="1"/>
</dbReference>
<dbReference type="FunFam" id="3.40.5.10:FF:000001">
    <property type="entry name" value="50S ribosomal protein L9"/>
    <property type="match status" value="1"/>
</dbReference>
<dbReference type="Gene3D" id="3.10.430.100">
    <property type="entry name" value="Ribosomal protein L9, C-terminal domain"/>
    <property type="match status" value="1"/>
</dbReference>
<dbReference type="Gene3D" id="3.40.5.10">
    <property type="entry name" value="Ribosomal protein L9, N-terminal domain"/>
    <property type="match status" value="1"/>
</dbReference>
<dbReference type="HAMAP" id="MF_00503">
    <property type="entry name" value="Ribosomal_bL9"/>
    <property type="match status" value="1"/>
</dbReference>
<dbReference type="InterPro" id="IPR000244">
    <property type="entry name" value="Ribosomal_bL9"/>
</dbReference>
<dbReference type="InterPro" id="IPR009027">
    <property type="entry name" value="Ribosomal_bL9/RNase_H1_N"/>
</dbReference>
<dbReference type="InterPro" id="IPR020594">
    <property type="entry name" value="Ribosomal_bL9_bac/chp"/>
</dbReference>
<dbReference type="InterPro" id="IPR020069">
    <property type="entry name" value="Ribosomal_bL9_C"/>
</dbReference>
<dbReference type="InterPro" id="IPR036791">
    <property type="entry name" value="Ribosomal_bL9_C_sf"/>
</dbReference>
<dbReference type="InterPro" id="IPR020070">
    <property type="entry name" value="Ribosomal_bL9_N"/>
</dbReference>
<dbReference type="InterPro" id="IPR036935">
    <property type="entry name" value="Ribosomal_bL9_N_sf"/>
</dbReference>
<dbReference type="NCBIfam" id="TIGR00158">
    <property type="entry name" value="L9"/>
    <property type="match status" value="1"/>
</dbReference>
<dbReference type="PANTHER" id="PTHR21368">
    <property type="entry name" value="50S RIBOSOMAL PROTEIN L9"/>
    <property type="match status" value="1"/>
</dbReference>
<dbReference type="Pfam" id="PF03948">
    <property type="entry name" value="Ribosomal_L9_C"/>
    <property type="match status" value="1"/>
</dbReference>
<dbReference type="Pfam" id="PF01281">
    <property type="entry name" value="Ribosomal_L9_N"/>
    <property type="match status" value="1"/>
</dbReference>
<dbReference type="SUPFAM" id="SSF55658">
    <property type="entry name" value="L9 N-domain-like"/>
    <property type="match status" value="1"/>
</dbReference>
<dbReference type="SUPFAM" id="SSF55653">
    <property type="entry name" value="Ribosomal protein L9 C-domain"/>
    <property type="match status" value="1"/>
</dbReference>
<dbReference type="PROSITE" id="PS00651">
    <property type="entry name" value="RIBOSOMAL_L9"/>
    <property type="match status" value="1"/>
</dbReference>
<proteinExistence type="inferred from homology"/>
<sequence length="149" mass="15784">MQVILLDKVANLGSLGDQVNVKAGYARNFLVPQGKAVPATKKNVEYFEARRAELEAKLADVLAAANARAEKINALETVTIASKAGDEGKLFGSIGTRDIADAVTAAGVDVAKSEVRLPNGVLRTTGEHEVNFQVHSEVFAKVIINVVAE</sequence>
<evidence type="ECO:0000255" key="1">
    <source>
        <dbReference type="HAMAP-Rule" id="MF_00503"/>
    </source>
</evidence>
<evidence type="ECO:0000305" key="2"/>
<reference key="1">
    <citation type="journal article" date="2004" name="Nat. Genet.">
        <title>Comparison of genome degradation in Paratyphi A and Typhi, human-restricted serovars of Salmonella enterica that cause typhoid.</title>
        <authorList>
            <person name="McClelland M."/>
            <person name="Sanderson K.E."/>
            <person name="Clifton S.W."/>
            <person name="Latreille P."/>
            <person name="Porwollik S."/>
            <person name="Sabo A."/>
            <person name="Meyer R."/>
            <person name="Bieri T."/>
            <person name="Ozersky P."/>
            <person name="McLellan M."/>
            <person name="Harkins C.R."/>
            <person name="Wang C."/>
            <person name="Nguyen C."/>
            <person name="Berghoff A."/>
            <person name="Elliott G."/>
            <person name="Kohlberg S."/>
            <person name="Strong C."/>
            <person name="Du F."/>
            <person name="Carter J."/>
            <person name="Kremizki C."/>
            <person name="Layman D."/>
            <person name="Leonard S."/>
            <person name="Sun H."/>
            <person name="Fulton L."/>
            <person name="Nash W."/>
            <person name="Miner T."/>
            <person name="Minx P."/>
            <person name="Delehaunty K."/>
            <person name="Fronick C."/>
            <person name="Magrini V."/>
            <person name="Nhan M."/>
            <person name="Warren W."/>
            <person name="Florea L."/>
            <person name="Spieth J."/>
            <person name="Wilson R.K."/>
        </authorList>
    </citation>
    <scope>NUCLEOTIDE SEQUENCE [LARGE SCALE GENOMIC DNA]</scope>
    <source>
        <strain>ATCC 9150 / SARB42</strain>
    </source>
</reference>
<gene>
    <name evidence="1" type="primary">rplI</name>
    <name type="ordered locus">SPA4211</name>
</gene>
<comment type="function">
    <text evidence="1">Binds to the 23S rRNA.</text>
</comment>
<comment type="similarity">
    <text evidence="1">Belongs to the bacterial ribosomal protein bL9 family.</text>
</comment>
<feature type="chain" id="PRO_0000236583" description="Large ribosomal subunit protein bL9">
    <location>
        <begin position="1"/>
        <end position="149"/>
    </location>
</feature>
<name>RL9_SALPA</name>
<keyword id="KW-0687">Ribonucleoprotein</keyword>
<keyword id="KW-0689">Ribosomal protein</keyword>
<keyword id="KW-0694">RNA-binding</keyword>
<keyword id="KW-0699">rRNA-binding</keyword>
<organism>
    <name type="scientific">Salmonella paratyphi A (strain ATCC 9150 / SARB42)</name>
    <dbReference type="NCBI Taxonomy" id="295319"/>
    <lineage>
        <taxon>Bacteria</taxon>
        <taxon>Pseudomonadati</taxon>
        <taxon>Pseudomonadota</taxon>
        <taxon>Gammaproteobacteria</taxon>
        <taxon>Enterobacterales</taxon>
        <taxon>Enterobacteriaceae</taxon>
        <taxon>Salmonella</taxon>
    </lineage>
</organism>
<accession>Q5PJ55</accession>